<evidence type="ECO:0000250" key="1"/>
<evidence type="ECO:0000255" key="2">
    <source>
        <dbReference type="HAMAP-Rule" id="MF_00480"/>
    </source>
</evidence>
<evidence type="ECO:0000305" key="3"/>
<feature type="chain" id="PRO_0000277039" description="Small ribosomal subunit protein uS7cz/uS7cy">
    <location>
        <begin position="1"/>
        <end position="155"/>
    </location>
</feature>
<comment type="function">
    <text evidence="1">One of the primary rRNA binding proteins, it binds directly to 16S rRNA where it nucleates assembly of the head domain of the 30S subunit.</text>
</comment>
<comment type="subunit">
    <text>Part of the 30S ribosomal subunit.</text>
</comment>
<comment type="subcellular location">
    <subcellularLocation>
        <location>Plastid</location>
        <location>Chloroplast</location>
    </subcellularLocation>
</comment>
<comment type="similarity">
    <text evidence="3">Belongs to the universal ribosomal protein uS7 family.</text>
</comment>
<gene>
    <name type="primary">rps7-A</name>
</gene>
<gene>
    <name type="primary">rps7-B</name>
</gene>
<proteinExistence type="inferred from homology"/>
<geneLocation type="chloroplast"/>
<sequence length="155" mass="17375">MSRRGTAEEKTAKSDPIYRNRLVNMLVNRILKHGKKSLAYQIIYRAMKKIQQKTETNPLSVLRQAIRGVTPDIAVKARRVGGSTHQVPIEIGSTQGKALAIRWLLGASRKRPGRNMAFKLSSELVDAAKGSGDAIRKKEETHRMAEANRAFAHFR</sequence>
<accession>Q49KT8</accession>
<name>RR7_EUCGG</name>
<organism>
    <name type="scientific">Eucalyptus globulus subsp. globulus</name>
    <name type="common">Tasmanian blue gum</name>
    <dbReference type="NCBI Taxonomy" id="71271"/>
    <lineage>
        <taxon>Eukaryota</taxon>
        <taxon>Viridiplantae</taxon>
        <taxon>Streptophyta</taxon>
        <taxon>Embryophyta</taxon>
        <taxon>Tracheophyta</taxon>
        <taxon>Spermatophyta</taxon>
        <taxon>Magnoliopsida</taxon>
        <taxon>eudicotyledons</taxon>
        <taxon>Gunneridae</taxon>
        <taxon>Pentapetalae</taxon>
        <taxon>rosids</taxon>
        <taxon>malvids</taxon>
        <taxon>Myrtales</taxon>
        <taxon>Myrtaceae</taxon>
        <taxon>Myrtoideae</taxon>
        <taxon>Eucalypteae</taxon>
        <taxon>Eucalyptus</taxon>
    </lineage>
</organism>
<protein>
    <recommendedName>
        <fullName evidence="2">Small ribosomal subunit protein uS7cz/uS7cy</fullName>
    </recommendedName>
    <alternativeName>
        <fullName>30S ribosomal protein S7, chloroplastic</fullName>
    </alternativeName>
</protein>
<keyword id="KW-0150">Chloroplast</keyword>
<keyword id="KW-0934">Plastid</keyword>
<keyword id="KW-0687">Ribonucleoprotein</keyword>
<keyword id="KW-0689">Ribosomal protein</keyword>
<keyword id="KW-0694">RNA-binding</keyword>
<keyword id="KW-0699">rRNA-binding</keyword>
<dbReference type="EMBL" id="AY780259">
    <property type="protein sequence ID" value="AAX21072.1"/>
    <property type="molecule type" value="Genomic_DNA"/>
</dbReference>
<dbReference type="EMBL" id="AY780259">
    <property type="protein sequence ID" value="AAX21089.1"/>
    <property type="molecule type" value="Genomic_DNA"/>
</dbReference>
<dbReference type="SMR" id="Q49KT8"/>
<dbReference type="GO" id="GO:0009507">
    <property type="term" value="C:chloroplast"/>
    <property type="evidence" value="ECO:0007669"/>
    <property type="project" value="UniProtKB-SubCell"/>
</dbReference>
<dbReference type="GO" id="GO:0015935">
    <property type="term" value="C:small ribosomal subunit"/>
    <property type="evidence" value="ECO:0007669"/>
    <property type="project" value="InterPro"/>
</dbReference>
<dbReference type="GO" id="GO:0019843">
    <property type="term" value="F:rRNA binding"/>
    <property type="evidence" value="ECO:0007669"/>
    <property type="project" value="UniProtKB-UniRule"/>
</dbReference>
<dbReference type="GO" id="GO:0003735">
    <property type="term" value="F:structural constituent of ribosome"/>
    <property type="evidence" value="ECO:0007669"/>
    <property type="project" value="InterPro"/>
</dbReference>
<dbReference type="GO" id="GO:0006412">
    <property type="term" value="P:translation"/>
    <property type="evidence" value="ECO:0007669"/>
    <property type="project" value="UniProtKB-UniRule"/>
</dbReference>
<dbReference type="CDD" id="cd14871">
    <property type="entry name" value="uS7_Chloroplast"/>
    <property type="match status" value="1"/>
</dbReference>
<dbReference type="FunFam" id="1.10.455.10:FF:000001">
    <property type="entry name" value="30S ribosomal protein S7"/>
    <property type="match status" value="1"/>
</dbReference>
<dbReference type="Gene3D" id="1.10.455.10">
    <property type="entry name" value="Ribosomal protein S7 domain"/>
    <property type="match status" value="1"/>
</dbReference>
<dbReference type="HAMAP" id="MF_00480_B">
    <property type="entry name" value="Ribosomal_uS7_B"/>
    <property type="match status" value="1"/>
</dbReference>
<dbReference type="InterPro" id="IPR000235">
    <property type="entry name" value="Ribosomal_uS7"/>
</dbReference>
<dbReference type="InterPro" id="IPR005717">
    <property type="entry name" value="Ribosomal_uS7_bac/org-type"/>
</dbReference>
<dbReference type="InterPro" id="IPR020606">
    <property type="entry name" value="Ribosomal_uS7_CS"/>
</dbReference>
<dbReference type="InterPro" id="IPR023798">
    <property type="entry name" value="Ribosomal_uS7_dom"/>
</dbReference>
<dbReference type="InterPro" id="IPR036823">
    <property type="entry name" value="Ribosomal_uS7_dom_sf"/>
</dbReference>
<dbReference type="NCBIfam" id="TIGR01029">
    <property type="entry name" value="rpsG_bact"/>
    <property type="match status" value="1"/>
</dbReference>
<dbReference type="PANTHER" id="PTHR11205">
    <property type="entry name" value="RIBOSOMAL PROTEIN S7"/>
    <property type="match status" value="1"/>
</dbReference>
<dbReference type="Pfam" id="PF00177">
    <property type="entry name" value="Ribosomal_S7"/>
    <property type="match status" value="1"/>
</dbReference>
<dbReference type="PIRSF" id="PIRSF002122">
    <property type="entry name" value="RPS7p_RPS7a_RPS5e_RPS7o"/>
    <property type="match status" value="1"/>
</dbReference>
<dbReference type="SUPFAM" id="SSF47973">
    <property type="entry name" value="Ribosomal protein S7"/>
    <property type="match status" value="1"/>
</dbReference>
<dbReference type="PROSITE" id="PS00052">
    <property type="entry name" value="RIBOSOMAL_S7"/>
    <property type="match status" value="1"/>
</dbReference>
<reference key="1">
    <citation type="journal article" date="2005" name="DNA Res.">
        <title>Complete nucleotide sequence of the chloroplast genome from the Tasmanian blue gum, Eucalyptus globulus (Myrtaceae).</title>
        <authorList>
            <person name="Steane D.A."/>
        </authorList>
    </citation>
    <scope>NUCLEOTIDE SEQUENCE [LARGE SCALE GENOMIC DNA]</scope>
</reference>